<protein>
    <recommendedName>
        <fullName evidence="1">tRNA modification GTPase MnmE</fullName>
        <ecNumber evidence="1">3.6.-.-</ecNumber>
    </recommendedName>
</protein>
<sequence length="474" mass="50223">MTSPTVSDAASAPIRTVPIAAIATAPGRGGIGVVRVSGPDVRAVMQAVCGRLLPPRQATYLPFLDADGAAIDRGIALWFPAPHSYTGEDVLELQGHGGPVVMQLLLSRCLRAGHGIGLRVAEPGEFTRRAFLNDKLDLAQAEAVADLIEASTEAAARSAARSLDGVFSQTVHALVERVIHLRMLVEATLDFPEEEIDFLEAADARGQLADIRARLDGVLAQARQGALLREGLHVVLAGQPNVGKSSLLNALAGAELAIVTPIAGTTRDKVQQTIQIEGIPLNIVDTAGLRDTEDEVERIGIERTWAAIARADVVLHLLDAADYRAHGLSAEDAAIDARIAEHVPPGVPTLRVINKIDLAGAAVPGRVDAQPPEVWLSARDGSGIELLRAALLEIAGWQGGGEGLYLARERHLSALRSAREHLTIAADHADQRAQSLDLFAEELRLAQEALNSITGAFSSDDLLGVIFSRFCIGK</sequence>
<evidence type="ECO:0000255" key="1">
    <source>
        <dbReference type="HAMAP-Rule" id="MF_00379"/>
    </source>
</evidence>
<evidence type="ECO:0000305" key="2"/>
<accession>Q8Y3H5</accession>
<keyword id="KW-0963">Cytoplasm</keyword>
<keyword id="KW-0342">GTP-binding</keyword>
<keyword id="KW-0378">Hydrolase</keyword>
<keyword id="KW-0460">Magnesium</keyword>
<keyword id="KW-0479">Metal-binding</keyword>
<keyword id="KW-0547">Nucleotide-binding</keyword>
<keyword id="KW-0630">Potassium</keyword>
<keyword id="KW-1185">Reference proteome</keyword>
<keyword id="KW-0819">tRNA processing</keyword>
<name>MNME_RALN1</name>
<reference key="1">
    <citation type="journal article" date="2002" name="Nature">
        <title>Genome sequence of the plant pathogen Ralstonia solanacearum.</title>
        <authorList>
            <person name="Salanoubat M."/>
            <person name="Genin S."/>
            <person name="Artiguenave F."/>
            <person name="Gouzy J."/>
            <person name="Mangenot S."/>
            <person name="Arlat M."/>
            <person name="Billault A."/>
            <person name="Brottier P."/>
            <person name="Camus J.-C."/>
            <person name="Cattolico L."/>
            <person name="Chandler M."/>
            <person name="Choisne N."/>
            <person name="Claudel-Renard C."/>
            <person name="Cunnac S."/>
            <person name="Demange N."/>
            <person name="Gaspin C."/>
            <person name="Lavie M."/>
            <person name="Moisan A."/>
            <person name="Robert C."/>
            <person name="Saurin W."/>
            <person name="Schiex T."/>
            <person name="Siguier P."/>
            <person name="Thebault P."/>
            <person name="Whalen M."/>
            <person name="Wincker P."/>
            <person name="Levy M."/>
            <person name="Weissenbach J."/>
            <person name="Boucher C.A."/>
        </authorList>
    </citation>
    <scope>NUCLEOTIDE SEQUENCE [LARGE SCALE GENOMIC DNA]</scope>
    <source>
        <strain>ATCC BAA-1114 / GMI1000</strain>
    </source>
</reference>
<comment type="function">
    <text evidence="1">Exhibits a very high intrinsic GTPase hydrolysis rate. Involved in the addition of a carboxymethylaminomethyl (cmnm) group at the wobble position (U34) of certain tRNAs, forming tRNA-cmnm(5)s(2)U34.</text>
</comment>
<comment type="cofactor">
    <cofactor evidence="1">
        <name>K(+)</name>
        <dbReference type="ChEBI" id="CHEBI:29103"/>
    </cofactor>
    <text evidence="1">Binds 1 potassium ion per subunit.</text>
</comment>
<comment type="subunit">
    <text evidence="1">Homodimer. Heterotetramer of two MnmE and two MnmG subunits.</text>
</comment>
<comment type="subcellular location">
    <subcellularLocation>
        <location evidence="1">Cytoplasm</location>
    </subcellularLocation>
</comment>
<comment type="similarity">
    <text evidence="1">Belongs to the TRAFAC class TrmE-Era-EngA-EngB-Septin-like GTPase superfamily. TrmE GTPase family.</text>
</comment>
<comment type="sequence caution" evidence="2">
    <conflict type="erroneous initiation">
        <sequence resource="EMBL-CDS" id="CAD13533"/>
    </conflict>
</comment>
<dbReference type="EC" id="3.6.-.-" evidence="1"/>
<dbReference type="EMBL" id="AL646052">
    <property type="protein sequence ID" value="CAD13533.1"/>
    <property type="status" value="ALT_INIT"/>
    <property type="molecule type" value="Genomic_DNA"/>
</dbReference>
<dbReference type="RefSeq" id="WP_375341814.1">
    <property type="nucleotide sequence ID" value="NC_003295.1"/>
</dbReference>
<dbReference type="SMR" id="Q8Y3H5"/>
<dbReference type="STRING" id="267608.RSc0005"/>
<dbReference type="EnsemblBacteria" id="CAD13533">
    <property type="protein sequence ID" value="CAD13533"/>
    <property type="gene ID" value="RSc0005"/>
</dbReference>
<dbReference type="KEGG" id="rso:RSc0005"/>
<dbReference type="PATRIC" id="fig|267608.8.peg.5"/>
<dbReference type="eggNOG" id="COG0486">
    <property type="taxonomic scope" value="Bacteria"/>
</dbReference>
<dbReference type="HOGENOM" id="CLU_019624_4_1_4"/>
<dbReference type="Proteomes" id="UP000001436">
    <property type="component" value="Chromosome"/>
</dbReference>
<dbReference type="GO" id="GO:0005829">
    <property type="term" value="C:cytosol"/>
    <property type="evidence" value="ECO:0007669"/>
    <property type="project" value="TreeGrafter"/>
</dbReference>
<dbReference type="GO" id="GO:0005525">
    <property type="term" value="F:GTP binding"/>
    <property type="evidence" value="ECO:0007669"/>
    <property type="project" value="UniProtKB-UniRule"/>
</dbReference>
<dbReference type="GO" id="GO:0003924">
    <property type="term" value="F:GTPase activity"/>
    <property type="evidence" value="ECO:0007669"/>
    <property type="project" value="UniProtKB-UniRule"/>
</dbReference>
<dbReference type="GO" id="GO:0046872">
    <property type="term" value="F:metal ion binding"/>
    <property type="evidence" value="ECO:0007669"/>
    <property type="project" value="UniProtKB-KW"/>
</dbReference>
<dbReference type="GO" id="GO:0030488">
    <property type="term" value="P:tRNA methylation"/>
    <property type="evidence" value="ECO:0007669"/>
    <property type="project" value="TreeGrafter"/>
</dbReference>
<dbReference type="GO" id="GO:0002098">
    <property type="term" value="P:tRNA wobble uridine modification"/>
    <property type="evidence" value="ECO:0007669"/>
    <property type="project" value="TreeGrafter"/>
</dbReference>
<dbReference type="CDD" id="cd04164">
    <property type="entry name" value="trmE"/>
    <property type="match status" value="1"/>
</dbReference>
<dbReference type="CDD" id="cd14858">
    <property type="entry name" value="TrmE_N"/>
    <property type="match status" value="1"/>
</dbReference>
<dbReference type="Gene3D" id="3.40.50.300">
    <property type="entry name" value="P-loop containing nucleotide triphosphate hydrolases"/>
    <property type="match status" value="1"/>
</dbReference>
<dbReference type="Gene3D" id="3.30.1360.120">
    <property type="entry name" value="Probable tRNA modification gtpase trme, domain 1"/>
    <property type="match status" value="1"/>
</dbReference>
<dbReference type="Gene3D" id="1.20.120.430">
    <property type="entry name" value="tRNA modification GTPase MnmE domain 2"/>
    <property type="match status" value="1"/>
</dbReference>
<dbReference type="HAMAP" id="MF_00379">
    <property type="entry name" value="GTPase_MnmE"/>
    <property type="match status" value="1"/>
</dbReference>
<dbReference type="InterPro" id="IPR031168">
    <property type="entry name" value="G_TrmE"/>
</dbReference>
<dbReference type="InterPro" id="IPR006073">
    <property type="entry name" value="GTP-bd"/>
</dbReference>
<dbReference type="InterPro" id="IPR018948">
    <property type="entry name" value="GTP-bd_TrmE_N"/>
</dbReference>
<dbReference type="InterPro" id="IPR004520">
    <property type="entry name" value="GTPase_MnmE"/>
</dbReference>
<dbReference type="InterPro" id="IPR027368">
    <property type="entry name" value="MnmE_dom2"/>
</dbReference>
<dbReference type="InterPro" id="IPR025867">
    <property type="entry name" value="MnmE_helical"/>
</dbReference>
<dbReference type="InterPro" id="IPR027417">
    <property type="entry name" value="P-loop_NTPase"/>
</dbReference>
<dbReference type="InterPro" id="IPR005225">
    <property type="entry name" value="Small_GTP-bd"/>
</dbReference>
<dbReference type="InterPro" id="IPR027266">
    <property type="entry name" value="TrmE/GcvT_dom1"/>
</dbReference>
<dbReference type="NCBIfam" id="TIGR00450">
    <property type="entry name" value="mnmE_trmE_thdF"/>
    <property type="match status" value="1"/>
</dbReference>
<dbReference type="NCBIfam" id="NF003661">
    <property type="entry name" value="PRK05291.1-3"/>
    <property type="match status" value="1"/>
</dbReference>
<dbReference type="NCBIfam" id="TIGR00231">
    <property type="entry name" value="small_GTP"/>
    <property type="match status" value="1"/>
</dbReference>
<dbReference type="PANTHER" id="PTHR42714">
    <property type="entry name" value="TRNA MODIFICATION GTPASE GTPBP3"/>
    <property type="match status" value="1"/>
</dbReference>
<dbReference type="PANTHER" id="PTHR42714:SF2">
    <property type="entry name" value="TRNA MODIFICATION GTPASE GTPBP3, MITOCHONDRIAL"/>
    <property type="match status" value="1"/>
</dbReference>
<dbReference type="Pfam" id="PF01926">
    <property type="entry name" value="MMR_HSR1"/>
    <property type="match status" value="1"/>
</dbReference>
<dbReference type="Pfam" id="PF12631">
    <property type="entry name" value="MnmE_helical"/>
    <property type="match status" value="1"/>
</dbReference>
<dbReference type="Pfam" id="PF10396">
    <property type="entry name" value="TrmE_N"/>
    <property type="match status" value="1"/>
</dbReference>
<dbReference type="PRINTS" id="PR00326">
    <property type="entry name" value="GTP1OBG"/>
</dbReference>
<dbReference type="SUPFAM" id="SSF52540">
    <property type="entry name" value="P-loop containing nucleoside triphosphate hydrolases"/>
    <property type="match status" value="1"/>
</dbReference>
<dbReference type="SUPFAM" id="SSF116878">
    <property type="entry name" value="TrmE connector domain"/>
    <property type="match status" value="1"/>
</dbReference>
<dbReference type="PROSITE" id="PS51709">
    <property type="entry name" value="G_TRME"/>
    <property type="match status" value="1"/>
</dbReference>
<proteinExistence type="inferred from homology"/>
<gene>
    <name evidence="1" type="primary">mnmE</name>
    <name evidence="1" type="synonym">thdF</name>
    <name evidence="1" type="synonym">trmE</name>
    <name type="ordered locus">RSc0005</name>
    <name type="ORF">RS01827</name>
</gene>
<organism>
    <name type="scientific">Ralstonia nicotianae (strain ATCC BAA-1114 / GMI1000)</name>
    <name type="common">Ralstonia solanacearum</name>
    <dbReference type="NCBI Taxonomy" id="267608"/>
    <lineage>
        <taxon>Bacteria</taxon>
        <taxon>Pseudomonadati</taxon>
        <taxon>Pseudomonadota</taxon>
        <taxon>Betaproteobacteria</taxon>
        <taxon>Burkholderiales</taxon>
        <taxon>Burkholderiaceae</taxon>
        <taxon>Ralstonia</taxon>
        <taxon>Ralstonia solanacearum species complex</taxon>
    </lineage>
</organism>
<feature type="chain" id="PRO_0000188908" description="tRNA modification GTPase MnmE">
    <location>
        <begin position="1"/>
        <end position="474"/>
    </location>
</feature>
<feature type="domain" description="TrmE-type G">
    <location>
        <begin position="231"/>
        <end position="396"/>
    </location>
</feature>
<feature type="binding site" evidence="1">
    <location>
        <position position="35"/>
    </location>
    <ligand>
        <name>(6S)-5-formyl-5,6,7,8-tetrahydrofolate</name>
        <dbReference type="ChEBI" id="CHEBI:57457"/>
    </ligand>
</feature>
<feature type="binding site" evidence="1">
    <location>
        <position position="92"/>
    </location>
    <ligand>
        <name>(6S)-5-formyl-5,6,7,8-tetrahydrofolate</name>
        <dbReference type="ChEBI" id="CHEBI:57457"/>
    </ligand>
</feature>
<feature type="binding site" evidence="1">
    <location>
        <position position="135"/>
    </location>
    <ligand>
        <name>(6S)-5-formyl-5,6,7,8-tetrahydrofolate</name>
        <dbReference type="ChEBI" id="CHEBI:57457"/>
    </ligand>
</feature>
<feature type="binding site" evidence="1">
    <location>
        <begin position="241"/>
        <end position="246"/>
    </location>
    <ligand>
        <name>GTP</name>
        <dbReference type="ChEBI" id="CHEBI:37565"/>
    </ligand>
</feature>
<feature type="binding site" evidence="1">
    <location>
        <position position="241"/>
    </location>
    <ligand>
        <name>K(+)</name>
        <dbReference type="ChEBI" id="CHEBI:29103"/>
    </ligand>
</feature>
<feature type="binding site" evidence="1">
    <location>
        <position position="245"/>
    </location>
    <ligand>
        <name>Mg(2+)</name>
        <dbReference type="ChEBI" id="CHEBI:18420"/>
    </ligand>
</feature>
<feature type="binding site" evidence="1">
    <location>
        <begin position="260"/>
        <end position="266"/>
    </location>
    <ligand>
        <name>GTP</name>
        <dbReference type="ChEBI" id="CHEBI:37565"/>
    </ligand>
</feature>
<feature type="binding site" evidence="1">
    <location>
        <position position="260"/>
    </location>
    <ligand>
        <name>K(+)</name>
        <dbReference type="ChEBI" id="CHEBI:29103"/>
    </ligand>
</feature>
<feature type="binding site" evidence="1">
    <location>
        <position position="262"/>
    </location>
    <ligand>
        <name>K(+)</name>
        <dbReference type="ChEBI" id="CHEBI:29103"/>
    </ligand>
</feature>
<feature type="binding site" evidence="1">
    <location>
        <position position="265"/>
    </location>
    <ligand>
        <name>K(+)</name>
        <dbReference type="ChEBI" id="CHEBI:29103"/>
    </ligand>
</feature>
<feature type="binding site" evidence="1">
    <location>
        <position position="266"/>
    </location>
    <ligand>
        <name>Mg(2+)</name>
        <dbReference type="ChEBI" id="CHEBI:18420"/>
    </ligand>
</feature>
<feature type="binding site" evidence="1">
    <location>
        <begin position="285"/>
        <end position="288"/>
    </location>
    <ligand>
        <name>GTP</name>
        <dbReference type="ChEBI" id="CHEBI:37565"/>
    </ligand>
</feature>
<feature type="binding site" evidence="1">
    <location>
        <begin position="377"/>
        <end position="379"/>
    </location>
    <ligand>
        <name>GTP</name>
        <dbReference type="ChEBI" id="CHEBI:37565"/>
    </ligand>
</feature>
<feature type="binding site" evidence="1">
    <location>
        <position position="474"/>
    </location>
    <ligand>
        <name>(6S)-5-formyl-5,6,7,8-tetrahydrofolate</name>
        <dbReference type="ChEBI" id="CHEBI:57457"/>
    </ligand>
</feature>